<protein>
    <recommendedName>
        <fullName evidence="1">Homoserine kinase</fullName>
        <shortName evidence="1">HK</shortName>
        <shortName evidence="1">HSK</shortName>
        <ecNumber evidence="1">2.7.1.39</ecNumber>
    </recommendedName>
</protein>
<reference key="1">
    <citation type="submission" date="2008-06" db="EMBL/GenBank/DDBJ databases">
        <title>Complete sequence of Chloroherpeton thalassium ATCC 35110.</title>
        <authorList>
            <consortium name="US DOE Joint Genome Institute"/>
            <person name="Lucas S."/>
            <person name="Copeland A."/>
            <person name="Lapidus A."/>
            <person name="Glavina del Rio T."/>
            <person name="Dalin E."/>
            <person name="Tice H."/>
            <person name="Bruce D."/>
            <person name="Goodwin L."/>
            <person name="Pitluck S."/>
            <person name="Schmutz J."/>
            <person name="Larimer F."/>
            <person name="Land M."/>
            <person name="Hauser L."/>
            <person name="Kyrpides N."/>
            <person name="Mikhailova N."/>
            <person name="Liu Z."/>
            <person name="Li T."/>
            <person name="Zhao F."/>
            <person name="Overmann J."/>
            <person name="Bryant D.A."/>
            <person name="Richardson P."/>
        </authorList>
    </citation>
    <scope>NUCLEOTIDE SEQUENCE [LARGE SCALE GENOMIC DNA]</scope>
    <source>
        <strain>ATCC 35110 / GB-78</strain>
    </source>
</reference>
<accession>B3QWX6</accession>
<proteinExistence type="inferred from homology"/>
<name>KHSE_CHLT3</name>
<organism>
    <name type="scientific">Chloroherpeton thalassium (strain ATCC 35110 / GB-78)</name>
    <dbReference type="NCBI Taxonomy" id="517418"/>
    <lineage>
        <taxon>Bacteria</taxon>
        <taxon>Pseudomonadati</taxon>
        <taxon>Chlorobiota</taxon>
        <taxon>Chlorobiia</taxon>
        <taxon>Chlorobiales</taxon>
        <taxon>Chloroherpetonaceae</taxon>
        <taxon>Chloroherpeton</taxon>
    </lineage>
</organism>
<evidence type="ECO:0000255" key="1">
    <source>
        <dbReference type="HAMAP-Rule" id="MF_00384"/>
    </source>
</evidence>
<dbReference type="EC" id="2.7.1.39" evidence="1"/>
<dbReference type="EMBL" id="CP001100">
    <property type="protein sequence ID" value="ACF13340.1"/>
    <property type="molecule type" value="Genomic_DNA"/>
</dbReference>
<dbReference type="RefSeq" id="WP_012499424.1">
    <property type="nucleotide sequence ID" value="NC_011026.1"/>
</dbReference>
<dbReference type="SMR" id="B3QWX6"/>
<dbReference type="STRING" id="517418.Ctha_0872"/>
<dbReference type="KEGG" id="cts:Ctha_0872"/>
<dbReference type="eggNOG" id="COG0083">
    <property type="taxonomic scope" value="Bacteria"/>
</dbReference>
<dbReference type="HOGENOM" id="CLU_041243_1_1_10"/>
<dbReference type="OrthoDB" id="9769912at2"/>
<dbReference type="UniPathway" id="UPA00050">
    <property type="reaction ID" value="UER00064"/>
</dbReference>
<dbReference type="Proteomes" id="UP000001208">
    <property type="component" value="Chromosome"/>
</dbReference>
<dbReference type="GO" id="GO:0005737">
    <property type="term" value="C:cytoplasm"/>
    <property type="evidence" value="ECO:0007669"/>
    <property type="project" value="UniProtKB-SubCell"/>
</dbReference>
<dbReference type="GO" id="GO:0005524">
    <property type="term" value="F:ATP binding"/>
    <property type="evidence" value="ECO:0007669"/>
    <property type="project" value="UniProtKB-UniRule"/>
</dbReference>
<dbReference type="GO" id="GO:0004413">
    <property type="term" value="F:homoserine kinase activity"/>
    <property type="evidence" value="ECO:0007669"/>
    <property type="project" value="UniProtKB-UniRule"/>
</dbReference>
<dbReference type="GO" id="GO:0009088">
    <property type="term" value="P:threonine biosynthetic process"/>
    <property type="evidence" value="ECO:0007669"/>
    <property type="project" value="UniProtKB-UniRule"/>
</dbReference>
<dbReference type="Gene3D" id="3.30.230.10">
    <property type="match status" value="1"/>
</dbReference>
<dbReference type="Gene3D" id="3.30.70.890">
    <property type="entry name" value="GHMP kinase, C-terminal domain"/>
    <property type="match status" value="1"/>
</dbReference>
<dbReference type="HAMAP" id="MF_00384">
    <property type="entry name" value="Homoser_kinase"/>
    <property type="match status" value="1"/>
</dbReference>
<dbReference type="InterPro" id="IPR013750">
    <property type="entry name" value="GHMP_kinase_C_dom"/>
</dbReference>
<dbReference type="InterPro" id="IPR036554">
    <property type="entry name" value="GHMP_kinase_C_sf"/>
</dbReference>
<dbReference type="InterPro" id="IPR006204">
    <property type="entry name" value="GHMP_kinase_N_dom"/>
</dbReference>
<dbReference type="InterPro" id="IPR006203">
    <property type="entry name" value="GHMP_knse_ATP-bd_CS"/>
</dbReference>
<dbReference type="InterPro" id="IPR000870">
    <property type="entry name" value="Homoserine_kinase"/>
</dbReference>
<dbReference type="InterPro" id="IPR020568">
    <property type="entry name" value="Ribosomal_Su5_D2-typ_SF"/>
</dbReference>
<dbReference type="InterPro" id="IPR014721">
    <property type="entry name" value="Ribsml_uS5_D2-typ_fold_subgr"/>
</dbReference>
<dbReference type="NCBIfam" id="NF002288">
    <property type="entry name" value="PRK01212.1-4"/>
    <property type="match status" value="1"/>
</dbReference>
<dbReference type="NCBIfam" id="TIGR00191">
    <property type="entry name" value="thrB"/>
    <property type="match status" value="1"/>
</dbReference>
<dbReference type="PANTHER" id="PTHR20861:SF1">
    <property type="entry name" value="HOMOSERINE KINASE"/>
    <property type="match status" value="1"/>
</dbReference>
<dbReference type="PANTHER" id="PTHR20861">
    <property type="entry name" value="HOMOSERINE/4-DIPHOSPHOCYTIDYL-2-C-METHYL-D-ERYTHRITOL KINASE"/>
    <property type="match status" value="1"/>
</dbReference>
<dbReference type="Pfam" id="PF08544">
    <property type="entry name" value="GHMP_kinases_C"/>
    <property type="match status" value="1"/>
</dbReference>
<dbReference type="Pfam" id="PF00288">
    <property type="entry name" value="GHMP_kinases_N"/>
    <property type="match status" value="1"/>
</dbReference>
<dbReference type="PIRSF" id="PIRSF000676">
    <property type="entry name" value="Homoser_kin"/>
    <property type="match status" value="1"/>
</dbReference>
<dbReference type="PRINTS" id="PR00958">
    <property type="entry name" value="HOMSERKINASE"/>
</dbReference>
<dbReference type="SUPFAM" id="SSF55060">
    <property type="entry name" value="GHMP Kinase, C-terminal domain"/>
    <property type="match status" value="1"/>
</dbReference>
<dbReference type="SUPFAM" id="SSF54211">
    <property type="entry name" value="Ribosomal protein S5 domain 2-like"/>
    <property type="match status" value="1"/>
</dbReference>
<dbReference type="PROSITE" id="PS00627">
    <property type="entry name" value="GHMP_KINASES_ATP"/>
    <property type="match status" value="1"/>
</dbReference>
<sequence>MKQVTGFAPASVGNVACGFDVLGFALTEPGDEVTVSFTDDENSPAQVIISKIIGDGGALPTDPYKNTASIVVIKFLEFLKTHKGIEQSGTFSIELKKNLPLSSGMGSSASSAAAALIAANSLLGSPCTKMELVPFVMEGERIACGSIHADNAAPAMLGNFILTRSYDPLDLIPISTPPELYCSLVHPHIEVPTSHARSILKKEIALSSAVRQWGNVGALVAGLLRCDYELIGRALEDVVAEPVRAPLIPGFYDVKHAALDAGALGGSIAGSGPSIFAFSDSLAKAETIAKAMQETFRKVSNLESDIWFCPVSREGSRIL</sequence>
<feature type="chain" id="PRO_1000122409" description="Homoserine kinase">
    <location>
        <begin position="1"/>
        <end position="319"/>
    </location>
</feature>
<feature type="binding site" evidence="1">
    <location>
        <begin position="100"/>
        <end position="110"/>
    </location>
    <ligand>
        <name>ATP</name>
        <dbReference type="ChEBI" id="CHEBI:30616"/>
    </ligand>
</feature>
<comment type="function">
    <text evidence="1">Catalyzes the ATP-dependent phosphorylation of L-homoserine to L-homoserine phosphate.</text>
</comment>
<comment type="catalytic activity">
    <reaction evidence="1">
        <text>L-homoserine + ATP = O-phospho-L-homoserine + ADP + H(+)</text>
        <dbReference type="Rhea" id="RHEA:13985"/>
        <dbReference type="ChEBI" id="CHEBI:15378"/>
        <dbReference type="ChEBI" id="CHEBI:30616"/>
        <dbReference type="ChEBI" id="CHEBI:57476"/>
        <dbReference type="ChEBI" id="CHEBI:57590"/>
        <dbReference type="ChEBI" id="CHEBI:456216"/>
        <dbReference type="EC" id="2.7.1.39"/>
    </reaction>
</comment>
<comment type="pathway">
    <text evidence="1">Amino-acid biosynthesis; L-threonine biosynthesis; L-threonine from L-aspartate: step 4/5.</text>
</comment>
<comment type="subcellular location">
    <subcellularLocation>
        <location evidence="1">Cytoplasm</location>
    </subcellularLocation>
</comment>
<comment type="similarity">
    <text evidence="1">Belongs to the GHMP kinase family. Homoserine kinase subfamily.</text>
</comment>
<gene>
    <name evidence="1" type="primary">thrB</name>
    <name type="ordered locus">Ctha_0872</name>
</gene>
<keyword id="KW-0028">Amino-acid biosynthesis</keyword>
<keyword id="KW-0067">ATP-binding</keyword>
<keyword id="KW-0963">Cytoplasm</keyword>
<keyword id="KW-0418">Kinase</keyword>
<keyword id="KW-0547">Nucleotide-binding</keyword>
<keyword id="KW-1185">Reference proteome</keyword>
<keyword id="KW-0791">Threonine biosynthesis</keyword>
<keyword id="KW-0808">Transferase</keyword>